<evidence type="ECO:0000250" key="1"/>
<evidence type="ECO:0000255" key="2"/>
<evidence type="ECO:0000305" key="3"/>
<accession>P0C8S1</accession>
<accession>F4HRG3</accession>
<accession>O64976</accession>
<accession>Q9MAG6</accession>
<feature type="chain" id="PRO_0000212722" description="Probable disease resistance RPP8-like protein 2">
    <location>
        <begin position="1"/>
        <end position="906"/>
    </location>
</feature>
<feature type="domain" description="NB-ARC">
    <location>
        <begin position="144"/>
        <end position="454"/>
    </location>
</feature>
<feature type="repeat" description="LRR 1">
    <location>
        <begin position="573"/>
        <end position="597"/>
    </location>
</feature>
<feature type="repeat" description="LRR 2">
    <location>
        <begin position="598"/>
        <end position="621"/>
    </location>
</feature>
<feature type="repeat" description="LRR 3">
    <location>
        <begin position="623"/>
        <end position="644"/>
    </location>
</feature>
<feature type="repeat" description="LRR 4">
    <location>
        <begin position="646"/>
        <end position="671"/>
    </location>
</feature>
<feature type="repeat" description="LRR 5">
    <location>
        <begin position="672"/>
        <end position="696"/>
    </location>
</feature>
<feature type="repeat" description="LRR 6">
    <location>
        <begin position="704"/>
        <end position="727"/>
    </location>
</feature>
<feature type="repeat" description="LRR 7">
    <location>
        <begin position="740"/>
        <end position="766"/>
    </location>
</feature>
<feature type="repeat" description="LRR 8">
    <location>
        <begin position="767"/>
        <end position="790"/>
    </location>
</feature>
<feature type="repeat" description="LRR 9">
    <location>
        <begin position="791"/>
        <end position="818"/>
    </location>
</feature>
<feature type="repeat" description="LRR 10">
    <location>
        <begin position="840"/>
        <end position="865"/>
    </location>
</feature>
<feature type="coiled-coil region" evidence="2">
    <location>
        <begin position="15"/>
        <end position="68"/>
    </location>
</feature>
<feature type="binding site" evidence="2">
    <location>
        <begin position="190"/>
        <end position="197"/>
    </location>
    <ligand>
        <name>ATP</name>
        <dbReference type="ChEBI" id="CHEBI:30616"/>
    </ligand>
</feature>
<feature type="sequence conflict" description="In Ref. 3; AAC14558." evidence="3" ref="3">
    <original>M</original>
    <variation>T</variation>
    <location>
        <position position="248"/>
    </location>
</feature>
<feature type="sequence conflict" description="In Ref. 3; AAC14558." evidence="3" ref="3">
    <original>T</original>
    <variation>TA</variation>
    <location>
        <position position="339"/>
    </location>
</feature>
<proteinExistence type="inferred from homology"/>
<organism>
    <name type="scientific">Arabidopsis thaliana</name>
    <name type="common">Mouse-ear cress</name>
    <dbReference type="NCBI Taxonomy" id="3702"/>
    <lineage>
        <taxon>Eukaryota</taxon>
        <taxon>Viridiplantae</taxon>
        <taxon>Streptophyta</taxon>
        <taxon>Embryophyta</taxon>
        <taxon>Tracheophyta</taxon>
        <taxon>Spermatophyta</taxon>
        <taxon>Magnoliopsida</taxon>
        <taxon>eudicotyledons</taxon>
        <taxon>Gunneridae</taxon>
        <taxon>Pentapetalae</taxon>
        <taxon>rosids</taxon>
        <taxon>malvids</taxon>
        <taxon>Brassicales</taxon>
        <taxon>Brassicaceae</taxon>
        <taxon>Camelineae</taxon>
        <taxon>Arabidopsis</taxon>
    </lineage>
</organism>
<keyword id="KW-0067">ATP-binding</keyword>
<keyword id="KW-0175">Coiled coil</keyword>
<keyword id="KW-0433">Leucine-rich repeat</keyword>
<keyword id="KW-0547">Nucleotide-binding</keyword>
<keyword id="KW-0611">Plant defense</keyword>
<keyword id="KW-1185">Reference proteome</keyword>
<keyword id="KW-0677">Repeat</keyword>
<comment type="function">
    <text>Potential disease resistance protein.</text>
</comment>
<comment type="domain">
    <text evidence="1">The LRR repeats probably act as specificity determinant of pathogen recognition.</text>
</comment>
<comment type="similarity">
    <text evidence="3">Belongs to the disease resistance NB-LRR family. RPP8/HRT subfamily.</text>
</comment>
<comment type="sequence caution" evidence="3">
    <conflict type="erroneous gene model prediction">
        <sequence resource="EMBL-CDS" id="AAF69538"/>
    </conflict>
    <text>The predicted gene has been split into 2 genes: At1g53350 and At1g53360.</text>
</comment>
<comment type="online information" name="NIB-LRRS">
    <link uri="http://niblrrs.ucdavis.edu"/>
    <text>Functional and comparative genomics of disease resistance gene homologs</text>
</comment>
<dbReference type="EMBL" id="AC008007">
    <property type="protein sequence ID" value="AAF69538.1"/>
    <property type="status" value="ALT_SEQ"/>
    <property type="molecule type" value="Genomic_DNA"/>
</dbReference>
<dbReference type="EMBL" id="CP002684">
    <property type="protein sequence ID" value="AEE32929.2"/>
    <property type="molecule type" value="Genomic_DNA"/>
</dbReference>
<dbReference type="EMBL" id="AF039382">
    <property type="protein sequence ID" value="AAC14558.1"/>
    <property type="molecule type" value="Genomic_DNA"/>
</dbReference>
<dbReference type="PIR" id="F96573">
    <property type="entry name" value="F96573"/>
</dbReference>
<dbReference type="RefSeq" id="NP_001319213.1">
    <property type="nucleotide sequence ID" value="NM_001333589.1"/>
</dbReference>
<dbReference type="SMR" id="P0C8S1"/>
<dbReference type="BioGRID" id="26996">
    <property type="interactions" value="1"/>
</dbReference>
<dbReference type="FunCoup" id="P0C8S1">
    <property type="interactions" value="79"/>
</dbReference>
<dbReference type="STRING" id="3702.P0C8S1"/>
<dbReference type="iPTMnet" id="P0C8S1"/>
<dbReference type="PaxDb" id="3702-AT1G53350.1"/>
<dbReference type="ProteomicsDB" id="228221"/>
<dbReference type="EnsemblPlants" id="AT1G53350.1">
    <property type="protein sequence ID" value="AT1G53350.1"/>
    <property type="gene ID" value="AT1G53350"/>
</dbReference>
<dbReference type="GeneID" id="841771"/>
<dbReference type="Gramene" id="AT1G53350.1">
    <property type="protein sequence ID" value="AT1G53350.1"/>
    <property type="gene ID" value="AT1G53350"/>
</dbReference>
<dbReference type="KEGG" id="ath:AT1G53350"/>
<dbReference type="Araport" id="AT1G53350"/>
<dbReference type="TAIR" id="AT1G53350"/>
<dbReference type="eggNOG" id="KOG4658">
    <property type="taxonomic scope" value="Eukaryota"/>
</dbReference>
<dbReference type="HOGENOM" id="CLU_000837_25_4_1"/>
<dbReference type="InParanoid" id="P0C8S1"/>
<dbReference type="OMA" id="DAGCKLP"/>
<dbReference type="PhylomeDB" id="P0C8S1"/>
<dbReference type="PRO" id="PR:P0C8S1"/>
<dbReference type="Proteomes" id="UP000006548">
    <property type="component" value="Chromosome 1"/>
</dbReference>
<dbReference type="ExpressionAtlas" id="P0C8S1">
    <property type="expression patterns" value="baseline and differential"/>
</dbReference>
<dbReference type="GO" id="GO:0043531">
    <property type="term" value="F:ADP binding"/>
    <property type="evidence" value="ECO:0007669"/>
    <property type="project" value="InterPro"/>
</dbReference>
<dbReference type="GO" id="GO:0005524">
    <property type="term" value="F:ATP binding"/>
    <property type="evidence" value="ECO:0007669"/>
    <property type="project" value="UniProtKB-KW"/>
</dbReference>
<dbReference type="GO" id="GO:0098542">
    <property type="term" value="P:defense response to other organism"/>
    <property type="evidence" value="ECO:0007669"/>
    <property type="project" value="UniProtKB-ARBA"/>
</dbReference>
<dbReference type="CDD" id="cd14798">
    <property type="entry name" value="RX-CC_like"/>
    <property type="match status" value="1"/>
</dbReference>
<dbReference type="FunFam" id="1.20.5.4130:FF:000002">
    <property type="entry name" value="Disease resistance protein RPP8"/>
    <property type="match status" value="1"/>
</dbReference>
<dbReference type="FunFam" id="3.40.50.300:FF:001091">
    <property type="entry name" value="Probable disease resistance protein At1g61300"/>
    <property type="match status" value="1"/>
</dbReference>
<dbReference type="FunFam" id="1.10.10.10:FF:000322">
    <property type="entry name" value="Probable disease resistance protein At1g63360"/>
    <property type="match status" value="1"/>
</dbReference>
<dbReference type="FunFam" id="1.10.8.430:FF:000003">
    <property type="entry name" value="Probable disease resistance protein At5g66910"/>
    <property type="match status" value="1"/>
</dbReference>
<dbReference type="Gene3D" id="1.20.5.4130">
    <property type="match status" value="1"/>
</dbReference>
<dbReference type="Gene3D" id="1.10.8.430">
    <property type="entry name" value="Helical domain of apoptotic protease-activating factors"/>
    <property type="match status" value="1"/>
</dbReference>
<dbReference type="Gene3D" id="3.40.50.300">
    <property type="entry name" value="P-loop containing nucleotide triphosphate hydrolases"/>
    <property type="match status" value="1"/>
</dbReference>
<dbReference type="Gene3D" id="3.80.10.10">
    <property type="entry name" value="Ribonuclease Inhibitor"/>
    <property type="match status" value="1"/>
</dbReference>
<dbReference type="Gene3D" id="1.10.10.10">
    <property type="entry name" value="Winged helix-like DNA-binding domain superfamily/Winged helix DNA-binding domain"/>
    <property type="match status" value="1"/>
</dbReference>
<dbReference type="InterPro" id="IPR042197">
    <property type="entry name" value="Apaf_helical"/>
</dbReference>
<dbReference type="InterPro" id="IPR032675">
    <property type="entry name" value="LRR_dom_sf"/>
</dbReference>
<dbReference type="InterPro" id="IPR055414">
    <property type="entry name" value="LRR_R13L4/SHOC2-like"/>
</dbReference>
<dbReference type="InterPro" id="IPR002182">
    <property type="entry name" value="NB-ARC"/>
</dbReference>
<dbReference type="InterPro" id="IPR027417">
    <property type="entry name" value="P-loop_NTPase"/>
</dbReference>
<dbReference type="InterPro" id="IPR038005">
    <property type="entry name" value="RX-like_CC"/>
</dbReference>
<dbReference type="InterPro" id="IPR041118">
    <property type="entry name" value="Rx_N"/>
</dbReference>
<dbReference type="InterPro" id="IPR036388">
    <property type="entry name" value="WH-like_DNA-bd_sf"/>
</dbReference>
<dbReference type="PANTHER" id="PTHR36766:SF40">
    <property type="entry name" value="DISEASE RESISTANCE PROTEIN RGA3"/>
    <property type="match status" value="1"/>
</dbReference>
<dbReference type="PANTHER" id="PTHR36766">
    <property type="entry name" value="PLANT BROAD-SPECTRUM MILDEW RESISTANCE PROTEIN RPW8"/>
    <property type="match status" value="1"/>
</dbReference>
<dbReference type="Pfam" id="PF23598">
    <property type="entry name" value="LRR_14"/>
    <property type="match status" value="1"/>
</dbReference>
<dbReference type="Pfam" id="PF00931">
    <property type="entry name" value="NB-ARC"/>
    <property type="match status" value="1"/>
</dbReference>
<dbReference type="Pfam" id="PF18052">
    <property type="entry name" value="Rx_N"/>
    <property type="match status" value="1"/>
</dbReference>
<dbReference type="Pfam" id="PF23559">
    <property type="entry name" value="WH_DRP"/>
    <property type="match status" value="1"/>
</dbReference>
<dbReference type="PRINTS" id="PR00364">
    <property type="entry name" value="DISEASERSIST"/>
</dbReference>
<dbReference type="SUPFAM" id="SSF52058">
    <property type="entry name" value="L domain-like"/>
    <property type="match status" value="1"/>
</dbReference>
<dbReference type="SUPFAM" id="SSF52540">
    <property type="entry name" value="P-loop containing nucleoside triphosphate hydrolases"/>
    <property type="match status" value="1"/>
</dbReference>
<protein>
    <recommendedName>
        <fullName>Probable disease resistance RPP8-like protein 2</fullName>
    </recommendedName>
</protein>
<name>RP8L2_ARATH</name>
<sequence>MAEAVVSFGVEKLWELLSRESARLNGIDEQVDGLKRQLGRLQSLLKDADAKKNETERVRNFLEDVKDIVYDADDIIESFLLNELRGKEKGIKKQVRTLACFLVDRRKFASDIEGITKRISEVIVGMQSLGIQHIADGGGRSLSLQERQREIRQTFSRNSESDLVGLDQSVEELVDHLVENDSVQVVSVSGMGGIGKTTLARQVFHHDIVRRHFDGFSWVCVSQQFTRKDVWQRILQDLRPYDEGIIQMDEYTLQGELFELLESGRYLLVLDDVWKEEDWDRIKAVFPHKRGWKMLLTSRNEGLGLHADPTCFAFRPRILTPEQSWKLFERIVSSRRDKTEFKVDEAMGKEMVTYCGGLPLAVKVLGGLLAKKHTVLEWKRVHSNIVTHIVGKSGLSDDNSNSVYRVLSLSYEDLPMQLKHCFFYLAHFPEDYKIDVKILFNYWVAEGIITPFHDGSTIQDTGESYLEELVRRNMVVVEESYLTSRIEYCQMHDMMREVCLSKAKEENFIRVVKVPTTTSTTINAQSPCRSRRLVLHSGNALHMLGHKDNKKARSVLIFGVEEKFWKPRGFQCLPLLRVLDLSYVQFEGGKLPSSIGDLIHLRFLSLYEAGVSHLPSSLGNLKLLLCLNLGVADRLLVHVPNVLKEMQELRYLRLPRSMPAKTKLELGDLVNLESLTNFSTKHGSVTDLLRMTKLSVLNVIFSGECTFETLLLSLRELRNLETLSFHDFQKVSVANHGGELLVLDFIHLKDLTLSMHLPRFPDQYRFPPHLAHIWLIGCRMEEDPMPILEKLLHLKSVYLSSGAFLGRRMVCSKGGFPQLLALKMSYKKELVEWRVEEGSMPCLRTLTIDNCKKLKQLPDGLKYVTCLKELKIERMKREWTERLVIGGEDYYKVQHIPSVQFINCDH</sequence>
<gene>
    <name type="primary">RPP8L2</name>
    <name type="ordered locus">At1g53350</name>
    <name type="ORF">F12M16.35</name>
</gene>
<reference key="1">
    <citation type="journal article" date="2000" name="Nature">
        <title>Sequence and analysis of chromosome 1 of the plant Arabidopsis thaliana.</title>
        <authorList>
            <person name="Theologis A."/>
            <person name="Ecker J.R."/>
            <person name="Palm C.J."/>
            <person name="Federspiel N.A."/>
            <person name="Kaul S."/>
            <person name="White O."/>
            <person name="Alonso J."/>
            <person name="Altafi H."/>
            <person name="Araujo R."/>
            <person name="Bowman C.L."/>
            <person name="Brooks S.Y."/>
            <person name="Buehler E."/>
            <person name="Chan A."/>
            <person name="Chao Q."/>
            <person name="Chen H."/>
            <person name="Cheuk R.F."/>
            <person name="Chin C.W."/>
            <person name="Chung M.K."/>
            <person name="Conn L."/>
            <person name="Conway A.B."/>
            <person name="Conway A.R."/>
            <person name="Creasy T.H."/>
            <person name="Dewar K."/>
            <person name="Dunn P."/>
            <person name="Etgu P."/>
            <person name="Feldblyum T.V."/>
            <person name="Feng J.-D."/>
            <person name="Fong B."/>
            <person name="Fujii C.Y."/>
            <person name="Gill J.E."/>
            <person name="Goldsmith A.D."/>
            <person name="Haas B."/>
            <person name="Hansen N.F."/>
            <person name="Hughes B."/>
            <person name="Huizar L."/>
            <person name="Hunter J.L."/>
            <person name="Jenkins J."/>
            <person name="Johnson-Hopson C."/>
            <person name="Khan S."/>
            <person name="Khaykin E."/>
            <person name="Kim C.J."/>
            <person name="Koo H.L."/>
            <person name="Kremenetskaia I."/>
            <person name="Kurtz D.B."/>
            <person name="Kwan A."/>
            <person name="Lam B."/>
            <person name="Langin-Hooper S."/>
            <person name="Lee A."/>
            <person name="Lee J.M."/>
            <person name="Lenz C.A."/>
            <person name="Li J.H."/>
            <person name="Li Y.-P."/>
            <person name="Lin X."/>
            <person name="Liu S.X."/>
            <person name="Liu Z.A."/>
            <person name="Luros J.S."/>
            <person name="Maiti R."/>
            <person name="Marziali A."/>
            <person name="Militscher J."/>
            <person name="Miranda M."/>
            <person name="Nguyen M."/>
            <person name="Nierman W.C."/>
            <person name="Osborne B.I."/>
            <person name="Pai G."/>
            <person name="Peterson J."/>
            <person name="Pham P.K."/>
            <person name="Rizzo M."/>
            <person name="Rooney T."/>
            <person name="Rowley D."/>
            <person name="Sakano H."/>
            <person name="Salzberg S.L."/>
            <person name="Schwartz J.R."/>
            <person name="Shinn P."/>
            <person name="Southwick A.M."/>
            <person name="Sun H."/>
            <person name="Tallon L.J."/>
            <person name="Tambunga G."/>
            <person name="Toriumi M.J."/>
            <person name="Town C.D."/>
            <person name="Utterback T."/>
            <person name="Van Aken S."/>
            <person name="Vaysberg M."/>
            <person name="Vysotskaia V.S."/>
            <person name="Walker M."/>
            <person name="Wu D."/>
            <person name="Yu G."/>
            <person name="Fraser C.M."/>
            <person name="Venter J.C."/>
            <person name="Davis R.W."/>
        </authorList>
    </citation>
    <scope>NUCLEOTIDE SEQUENCE [LARGE SCALE GENOMIC DNA]</scope>
    <source>
        <strain>cv. Columbia</strain>
    </source>
</reference>
<reference key="2">
    <citation type="journal article" date="2017" name="Plant J.">
        <title>Araport11: a complete reannotation of the Arabidopsis thaliana reference genome.</title>
        <authorList>
            <person name="Cheng C.Y."/>
            <person name="Krishnakumar V."/>
            <person name="Chan A.P."/>
            <person name="Thibaud-Nissen F."/>
            <person name="Schobel S."/>
            <person name="Town C.D."/>
        </authorList>
    </citation>
    <scope>GENOME REANNOTATION</scope>
    <source>
        <strain>cv. Columbia</strain>
    </source>
</reference>
<reference key="3">
    <citation type="journal article" date="1998" name="Mol. Plant Microbe Interact.">
        <title>Identification of R-gene homologous DNA fragments genetically linked to disease resistance loci in Arabidopsis thaliana.</title>
        <authorList>
            <person name="Aarts M.G.M."/>
            <person name="te Lintel Hekkert B."/>
            <person name="Holub E.B."/>
            <person name="Beynon J.L."/>
            <person name="Stiekema W.J."/>
            <person name="Pereira A."/>
        </authorList>
    </citation>
    <scope>NUCLEOTIDE SEQUENCE [GENOMIC DNA] OF 199-356</scope>
    <source>
        <strain>cv. Landsberg erecta</strain>
    </source>
</reference>